<name>ASA1_LACTC</name>
<dbReference type="EMBL" id="CU928170">
    <property type="protein sequence ID" value="CAR24258.1"/>
    <property type="molecule type" value="Genomic_DNA"/>
</dbReference>
<dbReference type="RefSeq" id="XP_002554695.1">
    <property type="nucleotide sequence ID" value="XM_002554649.1"/>
</dbReference>
<dbReference type="FunCoup" id="C5DLA7">
    <property type="interactions" value="65"/>
</dbReference>
<dbReference type="STRING" id="559295.C5DLA7"/>
<dbReference type="GeneID" id="8292908"/>
<dbReference type="KEGG" id="lth:KLTH0F11440g"/>
<dbReference type="eggNOG" id="ENOG502QU4T">
    <property type="taxonomic scope" value="Eukaryota"/>
</dbReference>
<dbReference type="HOGENOM" id="CLU_045414_1_0_1"/>
<dbReference type="InParanoid" id="C5DLA7"/>
<dbReference type="OMA" id="LVCCNTQ"/>
<dbReference type="OrthoDB" id="7668193at2759"/>
<dbReference type="Proteomes" id="UP000002036">
    <property type="component" value="Chromosome F"/>
</dbReference>
<dbReference type="GO" id="GO:0005634">
    <property type="term" value="C:nucleus"/>
    <property type="evidence" value="ECO:0007669"/>
    <property type="project" value="UniProtKB-SubCell"/>
</dbReference>
<dbReference type="GO" id="GO:0006325">
    <property type="term" value="P:chromatin organization"/>
    <property type="evidence" value="ECO:0007669"/>
    <property type="project" value="UniProtKB-KW"/>
</dbReference>
<dbReference type="Gene3D" id="2.130.10.10">
    <property type="entry name" value="YVTN repeat-like/Quinoprotein amine dehydrogenase"/>
    <property type="match status" value="1"/>
</dbReference>
<dbReference type="InterPro" id="IPR015943">
    <property type="entry name" value="WD40/YVTN_repeat-like_dom_sf"/>
</dbReference>
<dbReference type="InterPro" id="IPR036322">
    <property type="entry name" value="WD40_repeat_dom_sf"/>
</dbReference>
<dbReference type="PANTHER" id="PTHR19854:SF1">
    <property type="entry name" value="GUANINE NUCLEOTIDE-BINDING PROTEIN SUBUNIT BETA-LIKE PROTEIN 1"/>
    <property type="match status" value="1"/>
</dbReference>
<dbReference type="PANTHER" id="PTHR19854">
    <property type="entry name" value="TRANSDUCIN BETA-LIKE 3"/>
    <property type="match status" value="1"/>
</dbReference>
<dbReference type="SUPFAM" id="SSF50978">
    <property type="entry name" value="WD40 repeat-like"/>
    <property type="match status" value="1"/>
</dbReference>
<feature type="chain" id="PRO_0000402212" description="ASTRA-associated protein 1">
    <location>
        <begin position="1"/>
        <end position="416"/>
    </location>
</feature>
<feature type="repeat" description="WD 1">
    <location>
        <begin position="13"/>
        <end position="54"/>
    </location>
</feature>
<feature type="repeat" description="WD 2">
    <location>
        <begin position="58"/>
        <end position="95"/>
    </location>
</feature>
<feature type="repeat" description="WD 3">
    <location>
        <begin position="111"/>
        <end position="147"/>
    </location>
</feature>
<feature type="repeat" description="WD 4">
    <location>
        <begin position="234"/>
        <end position="273"/>
    </location>
</feature>
<evidence type="ECO:0000250" key="1"/>
<evidence type="ECO:0000305" key="2"/>
<organism>
    <name type="scientific">Lachancea thermotolerans (strain ATCC 56472 / CBS 6340 / NRRL Y-8284)</name>
    <name type="common">Yeast</name>
    <name type="synonym">Kluyveromyces thermotolerans</name>
    <dbReference type="NCBI Taxonomy" id="559295"/>
    <lineage>
        <taxon>Eukaryota</taxon>
        <taxon>Fungi</taxon>
        <taxon>Dikarya</taxon>
        <taxon>Ascomycota</taxon>
        <taxon>Saccharomycotina</taxon>
        <taxon>Saccharomycetes</taxon>
        <taxon>Saccharomycetales</taxon>
        <taxon>Saccharomycetaceae</taxon>
        <taxon>Lachancea</taxon>
    </lineage>
</organism>
<keyword id="KW-0156">Chromatin regulator</keyword>
<keyword id="KW-0539">Nucleus</keyword>
<keyword id="KW-1185">Reference proteome</keyword>
<keyword id="KW-0677">Repeat</keyword>
<keyword id="KW-0853">WD repeat</keyword>
<accession>C5DLA7</accession>
<comment type="function">
    <text evidence="1">Component of the ASTRA complex involved in chromatin remodeling.</text>
</comment>
<comment type="subunit">
    <text evidence="1">Component of the ASTRA chromatin remodeling machinery complex.</text>
</comment>
<comment type="subcellular location">
    <subcellularLocation>
        <location evidence="1">Nucleus</location>
    </subcellularLocation>
</comment>
<comment type="similarity">
    <text evidence="2">Belongs to the WD repeat ASA1 family.</text>
</comment>
<proteinExistence type="inferred from homology"/>
<sequence length="416" mass="47017">MQGHQPAAYTLRKHETEVTCLKVVSWEPYPVLASGDAKGELYLWNLVTRRPFAGYKLETKAQIIYIKWLNNYLIVLSKDHTLRFLQLHNETAVAIRGWAGNQFELQSFKIVYEVPVNTLNFANVVVTHMRESQYRLWCCNTMDSESIDVYEFDVKEQRSLRRLVSGINLYKAIIKAGNWSTGESLDKTGIVMCFLEHNGVVYLGYECGFVLGLQLVERSGENPTIVVSYVSSVHYPEPVLSLCYNEREEVILSSSTNDAIGVHALQAHSVNVSESEIAFFSIEEGIAIKRDLTLINKSIHLPTSKIGHLGCVDGRLIAVDWSGRTLVCEKDETKFCFSKQRSNVLVDESSAGTFDQGKAPRCHIKATSMACIGKQTLRELRGIRRGEKRRTELCANRSWCFTGYEDGSVIMQSFET</sequence>
<gene>
    <name type="primary">ASA1</name>
    <name type="ordered locus">KLTH0F11440g</name>
</gene>
<reference key="1">
    <citation type="journal article" date="2009" name="Genome Res.">
        <title>Comparative genomics of protoploid Saccharomycetaceae.</title>
        <authorList>
            <consortium name="The Genolevures Consortium"/>
            <person name="Souciet J.-L."/>
            <person name="Dujon B."/>
            <person name="Gaillardin C."/>
            <person name="Johnston M."/>
            <person name="Baret P.V."/>
            <person name="Cliften P."/>
            <person name="Sherman D.J."/>
            <person name="Weissenbach J."/>
            <person name="Westhof E."/>
            <person name="Wincker P."/>
            <person name="Jubin C."/>
            <person name="Poulain J."/>
            <person name="Barbe V."/>
            <person name="Segurens B."/>
            <person name="Artiguenave F."/>
            <person name="Anthouard V."/>
            <person name="Vacherie B."/>
            <person name="Val M.-E."/>
            <person name="Fulton R.S."/>
            <person name="Minx P."/>
            <person name="Wilson R."/>
            <person name="Durrens P."/>
            <person name="Jean G."/>
            <person name="Marck C."/>
            <person name="Martin T."/>
            <person name="Nikolski M."/>
            <person name="Rolland T."/>
            <person name="Seret M.-L."/>
            <person name="Casaregola S."/>
            <person name="Despons L."/>
            <person name="Fairhead C."/>
            <person name="Fischer G."/>
            <person name="Lafontaine I."/>
            <person name="Leh V."/>
            <person name="Lemaire M."/>
            <person name="de Montigny J."/>
            <person name="Neuveglise C."/>
            <person name="Thierry A."/>
            <person name="Blanc-Lenfle I."/>
            <person name="Bleykasten C."/>
            <person name="Diffels J."/>
            <person name="Fritsch E."/>
            <person name="Frangeul L."/>
            <person name="Goeffon A."/>
            <person name="Jauniaux N."/>
            <person name="Kachouri-Lafond R."/>
            <person name="Payen C."/>
            <person name="Potier S."/>
            <person name="Pribylova L."/>
            <person name="Ozanne C."/>
            <person name="Richard G.-F."/>
            <person name="Sacerdot C."/>
            <person name="Straub M.-L."/>
            <person name="Talla E."/>
        </authorList>
    </citation>
    <scope>NUCLEOTIDE SEQUENCE [LARGE SCALE GENOMIC DNA]</scope>
    <source>
        <strain>ATCC 56472 / CBS 6340 / NRRL Y-8284</strain>
    </source>
</reference>
<protein>
    <recommendedName>
        <fullName>ASTRA-associated protein 1</fullName>
    </recommendedName>
</protein>